<name>GLYA_STAAW</name>
<organism>
    <name type="scientific">Staphylococcus aureus (strain MW2)</name>
    <dbReference type="NCBI Taxonomy" id="196620"/>
    <lineage>
        <taxon>Bacteria</taxon>
        <taxon>Bacillati</taxon>
        <taxon>Bacillota</taxon>
        <taxon>Bacilli</taxon>
        <taxon>Bacillales</taxon>
        <taxon>Staphylococcaceae</taxon>
        <taxon>Staphylococcus</taxon>
    </lineage>
</organism>
<keyword id="KW-0028">Amino-acid biosynthesis</keyword>
<keyword id="KW-0963">Cytoplasm</keyword>
<keyword id="KW-0554">One-carbon metabolism</keyword>
<keyword id="KW-0663">Pyridoxal phosphate</keyword>
<keyword id="KW-0808">Transferase</keyword>
<dbReference type="EC" id="2.1.2.1" evidence="1"/>
<dbReference type="EMBL" id="BA000033">
    <property type="protein sequence ID" value="BAB95902.1"/>
    <property type="molecule type" value="Genomic_DNA"/>
</dbReference>
<dbReference type="RefSeq" id="WP_000120494.1">
    <property type="nucleotide sequence ID" value="NC_003923.1"/>
</dbReference>
<dbReference type="SMR" id="P66804"/>
<dbReference type="KEGG" id="sam:MW2037"/>
<dbReference type="HOGENOM" id="CLU_022477_2_1_9"/>
<dbReference type="UniPathway" id="UPA00193"/>
<dbReference type="UniPathway" id="UPA00288">
    <property type="reaction ID" value="UER01023"/>
</dbReference>
<dbReference type="GO" id="GO:0005829">
    <property type="term" value="C:cytosol"/>
    <property type="evidence" value="ECO:0007669"/>
    <property type="project" value="TreeGrafter"/>
</dbReference>
<dbReference type="GO" id="GO:0004372">
    <property type="term" value="F:glycine hydroxymethyltransferase activity"/>
    <property type="evidence" value="ECO:0007669"/>
    <property type="project" value="UniProtKB-UniRule"/>
</dbReference>
<dbReference type="GO" id="GO:0030170">
    <property type="term" value="F:pyridoxal phosphate binding"/>
    <property type="evidence" value="ECO:0007669"/>
    <property type="project" value="UniProtKB-UniRule"/>
</dbReference>
<dbReference type="GO" id="GO:0019264">
    <property type="term" value="P:glycine biosynthetic process from serine"/>
    <property type="evidence" value="ECO:0007669"/>
    <property type="project" value="UniProtKB-UniRule"/>
</dbReference>
<dbReference type="GO" id="GO:0035999">
    <property type="term" value="P:tetrahydrofolate interconversion"/>
    <property type="evidence" value="ECO:0007669"/>
    <property type="project" value="UniProtKB-UniRule"/>
</dbReference>
<dbReference type="CDD" id="cd00378">
    <property type="entry name" value="SHMT"/>
    <property type="match status" value="1"/>
</dbReference>
<dbReference type="FunFam" id="3.40.640.10:FF:000001">
    <property type="entry name" value="Serine hydroxymethyltransferase"/>
    <property type="match status" value="1"/>
</dbReference>
<dbReference type="FunFam" id="3.90.1150.10:FF:000003">
    <property type="entry name" value="Serine hydroxymethyltransferase"/>
    <property type="match status" value="1"/>
</dbReference>
<dbReference type="Gene3D" id="3.90.1150.10">
    <property type="entry name" value="Aspartate Aminotransferase, domain 1"/>
    <property type="match status" value="1"/>
</dbReference>
<dbReference type="Gene3D" id="3.40.640.10">
    <property type="entry name" value="Type I PLP-dependent aspartate aminotransferase-like (Major domain)"/>
    <property type="match status" value="1"/>
</dbReference>
<dbReference type="HAMAP" id="MF_00051">
    <property type="entry name" value="SHMT"/>
    <property type="match status" value="1"/>
</dbReference>
<dbReference type="InterPro" id="IPR015424">
    <property type="entry name" value="PyrdxlP-dep_Trfase"/>
</dbReference>
<dbReference type="InterPro" id="IPR015421">
    <property type="entry name" value="PyrdxlP-dep_Trfase_major"/>
</dbReference>
<dbReference type="InterPro" id="IPR015422">
    <property type="entry name" value="PyrdxlP-dep_Trfase_small"/>
</dbReference>
<dbReference type="InterPro" id="IPR001085">
    <property type="entry name" value="Ser_HO-MeTrfase"/>
</dbReference>
<dbReference type="InterPro" id="IPR049943">
    <property type="entry name" value="Ser_HO-MeTrfase-like"/>
</dbReference>
<dbReference type="InterPro" id="IPR019798">
    <property type="entry name" value="Ser_HO-MeTrfase_PLP_BS"/>
</dbReference>
<dbReference type="InterPro" id="IPR039429">
    <property type="entry name" value="SHMT-like_dom"/>
</dbReference>
<dbReference type="NCBIfam" id="NF000586">
    <property type="entry name" value="PRK00011.1"/>
    <property type="match status" value="1"/>
</dbReference>
<dbReference type="PANTHER" id="PTHR11680">
    <property type="entry name" value="SERINE HYDROXYMETHYLTRANSFERASE"/>
    <property type="match status" value="1"/>
</dbReference>
<dbReference type="PANTHER" id="PTHR11680:SF35">
    <property type="entry name" value="SERINE HYDROXYMETHYLTRANSFERASE 1"/>
    <property type="match status" value="1"/>
</dbReference>
<dbReference type="Pfam" id="PF00464">
    <property type="entry name" value="SHMT"/>
    <property type="match status" value="1"/>
</dbReference>
<dbReference type="PIRSF" id="PIRSF000412">
    <property type="entry name" value="SHMT"/>
    <property type="match status" value="1"/>
</dbReference>
<dbReference type="SUPFAM" id="SSF53383">
    <property type="entry name" value="PLP-dependent transferases"/>
    <property type="match status" value="1"/>
</dbReference>
<dbReference type="PROSITE" id="PS00096">
    <property type="entry name" value="SHMT"/>
    <property type="match status" value="1"/>
</dbReference>
<feature type="chain" id="PRO_0000113666" description="Serine hydroxymethyltransferase">
    <location>
        <begin position="1"/>
        <end position="412"/>
    </location>
</feature>
<feature type="binding site" evidence="1">
    <location>
        <position position="117"/>
    </location>
    <ligand>
        <name>(6S)-5,6,7,8-tetrahydrofolate</name>
        <dbReference type="ChEBI" id="CHEBI:57453"/>
    </ligand>
</feature>
<feature type="binding site" evidence="1">
    <location>
        <begin position="121"/>
        <end position="123"/>
    </location>
    <ligand>
        <name>(6S)-5,6,7,8-tetrahydrofolate</name>
        <dbReference type="ChEBI" id="CHEBI:57453"/>
    </ligand>
</feature>
<feature type="site" description="Plays an important role in substrate specificity" evidence="1">
    <location>
        <position position="225"/>
    </location>
</feature>
<feature type="modified residue" description="N6-(pyridoxal phosphate)lysine" evidence="1">
    <location>
        <position position="226"/>
    </location>
</feature>
<sequence>MSYITKQDKVIAEAIEREFQRQNSNIELIASENFVSEAVMEAQGSVLTNKYAEGYPGRRYYGGCEFVDVTESIAIDRAKALFGAEHVNVQPHSGSQANMAVYLVALEMGDTVLGMNLSHGGHLTHGAPVNFSGKFYNFVEYGVDKDTERINYDEVRKLALEHKPKLIVAGASAYSRTIDFKKFKEIADEVNAKLMVDMAHIAGLVAAGLHPNPVEYADFVTTTTHKTLRGPRGGMILCKEEYKKDIDKTIFPGIQGGPLEHVIAAKAVAFGEALENNFKTYQQQVVKNAKVLAEALINEGFRIVSGGTDNHLVAVDVKGSIGLTGKEAEETLDSVGITCNKNTIPFDQEKPFVTSGIRLGTPAATTRGFDEKAFEEVAKIISLALKNSKDEEKLQQAKERVAKLTAEYPLYQ</sequence>
<reference key="1">
    <citation type="journal article" date="2002" name="Lancet">
        <title>Genome and virulence determinants of high virulence community-acquired MRSA.</title>
        <authorList>
            <person name="Baba T."/>
            <person name="Takeuchi F."/>
            <person name="Kuroda M."/>
            <person name="Yuzawa H."/>
            <person name="Aoki K."/>
            <person name="Oguchi A."/>
            <person name="Nagai Y."/>
            <person name="Iwama N."/>
            <person name="Asano K."/>
            <person name="Naimi T."/>
            <person name="Kuroda H."/>
            <person name="Cui L."/>
            <person name="Yamamoto K."/>
            <person name="Hiramatsu K."/>
        </authorList>
    </citation>
    <scope>NUCLEOTIDE SEQUENCE [LARGE SCALE GENOMIC DNA]</scope>
    <source>
        <strain>MW2</strain>
    </source>
</reference>
<accession>P66804</accession>
<accession>Q99SE5</accession>
<protein>
    <recommendedName>
        <fullName evidence="1">Serine hydroxymethyltransferase</fullName>
        <shortName evidence="1">SHMT</shortName>
        <shortName evidence="1">Serine methylase</shortName>
        <ecNumber evidence="1">2.1.2.1</ecNumber>
    </recommendedName>
</protein>
<comment type="function">
    <text evidence="1">Catalyzes the reversible interconversion of serine and glycine with tetrahydrofolate (THF) serving as the one-carbon carrier. This reaction serves as the major source of one-carbon groups required for the biosynthesis of purines, thymidylate, methionine, and other important biomolecules. Also exhibits THF-independent aldolase activity toward beta-hydroxyamino acids, producing glycine and aldehydes, via a retro-aldol mechanism.</text>
</comment>
<comment type="catalytic activity">
    <reaction evidence="1">
        <text>(6R)-5,10-methylene-5,6,7,8-tetrahydrofolate + glycine + H2O = (6S)-5,6,7,8-tetrahydrofolate + L-serine</text>
        <dbReference type="Rhea" id="RHEA:15481"/>
        <dbReference type="ChEBI" id="CHEBI:15377"/>
        <dbReference type="ChEBI" id="CHEBI:15636"/>
        <dbReference type="ChEBI" id="CHEBI:33384"/>
        <dbReference type="ChEBI" id="CHEBI:57305"/>
        <dbReference type="ChEBI" id="CHEBI:57453"/>
        <dbReference type="EC" id="2.1.2.1"/>
    </reaction>
</comment>
<comment type="cofactor">
    <cofactor evidence="1">
        <name>pyridoxal 5'-phosphate</name>
        <dbReference type="ChEBI" id="CHEBI:597326"/>
    </cofactor>
</comment>
<comment type="pathway">
    <text evidence="1">One-carbon metabolism; tetrahydrofolate interconversion.</text>
</comment>
<comment type="pathway">
    <text evidence="1">Amino-acid biosynthesis; glycine biosynthesis; glycine from L-serine: step 1/1.</text>
</comment>
<comment type="subunit">
    <text evidence="1">Homodimer.</text>
</comment>
<comment type="subcellular location">
    <subcellularLocation>
        <location evidence="1">Cytoplasm</location>
    </subcellularLocation>
</comment>
<comment type="similarity">
    <text evidence="1">Belongs to the SHMT family.</text>
</comment>
<proteinExistence type="inferred from homology"/>
<evidence type="ECO:0000255" key="1">
    <source>
        <dbReference type="HAMAP-Rule" id="MF_00051"/>
    </source>
</evidence>
<gene>
    <name evidence="1" type="primary">glyA</name>
    <name type="ordered locus">MW2037</name>
</gene>